<protein>
    <recommendedName>
        <fullName evidence="1">Beta-ketoacyl-[acyl-carrier-protein] synthase III</fullName>
        <shortName evidence="1">Beta-ketoacyl-ACP synthase III</shortName>
        <shortName evidence="1">KAS III</shortName>
        <ecNumber evidence="1">2.3.1.180</ecNumber>
    </recommendedName>
    <alternativeName>
        <fullName evidence="1">3-oxoacyl-[acyl-carrier-protein] synthase 3</fullName>
    </alternativeName>
    <alternativeName>
        <fullName evidence="1">3-oxoacyl-[acyl-carrier-protein] synthase III</fullName>
    </alternativeName>
</protein>
<gene>
    <name evidence="1" type="primary">fabH</name>
    <name type="ordered locus">WP1025</name>
</gene>
<organism>
    <name type="scientific">Wolbachia pipientis subsp. Culex pipiens (strain wPip)</name>
    <dbReference type="NCBI Taxonomy" id="570417"/>
    <lineage>
        <taxon>Bacteria</taxon>
        <taxon>Pseudomonadati</taxon>
        <taxon>Pseudomonadota</taxon>
        <taxon>Alphaproteobacteria</taxon>
        <taxon>Rickettsiales</taxon>
        <taxon>Anaplasmataceae</taxon>
        <taxon>Wolbachieae</taxon>
        <taxon>Wolbachia</taxon>
    </lineage>
</organism>
<comment type="function">
    <text evidence="1">Catalyzes the condensation reaction of fatty acid synthesis by the addition to an acyl acceptor of two carbons from malonyl-ACP. Catalyzes the first condensation reaction which initiates fatty acid synthesis and may therefore play a role in governing the total rate of fatty acid production. Possesses both acetoacetyl-ACP synthase and acetyl transacylase activities. Its substrate specificity determines the biosynthesis of branched-chain and/or straight-chain of fatty acids.</text>
</comment>
<comment type="catalytic activity">
    <reaction evidence="1">
        <text>malonyl-[ACP] + acetyl-CoA + H(+) = 3-oxobutanoyl-[ACP] + CO2 + CoA</text>
        <dbReference type="Rhea" id="RHEA:12080"/>
        <dbReference type="Rhea" id="RHEA-COMP:9623"/>
        <dbReference type="Rhea" id="RHEA-COMP:9625"/>
        <dbReference type="ChEBI" id="CHEBI:15378"/>
        <dbReference type="ChEBI" id="CHEBI:16526"/>
        <dbReference type="ChEBI" id="CHEBI:57287"/>
        <dbReference type="ChEBI" id="CHEBI:57288"/>
        <dbReference type="ChEBI" id="CHEBI:78449"/>
        <dbReference type="ChEBI" id="CHEBI:78450"/>
        <dbReference type="EC" id="2.3.1.180"/>
    </reaction>
</comment>
<comment type="pathway">
    <text evidence="1">Lipid metabolism; fatty acid biosynthesis.</text>
</comment>
<comment type="subunit">
    <text evidence="1">Homodimer.</text>
</comment>
<comment type="subcellular location">
    <subcellularLocation>
        <location evidence="1">Cytoplasm</location>
    </subcellularLocation>
</comment>
<comment type="domain">
    <text evidence="1">The last Arg residue of the ACP-binding site is essential for the weak association between ACP/AcpP and FabH.</text>
</comment>
<comment type="similarity">
    <text evidence="1">Belongs to the thiolase-like superfamily. FabH family.</text>
</comment>
<proteinExistence type="inferred from homology"/>
<keyword id="KW-0012">Acyltransferase</keyword>
<keyword id="KW-0963">Cytoplasm</keyword>
<keyword id="KW-0275">Fatty acid biosynthesis</keyword>
<keyword id="KW-0276">Fatty acid metabolism</keyword>
<keyword id="KW-0444">Lipid biosynthesis</keyword>
<keyword id="KW-0443">Lipid metabolism</keyword>
<keyword id="KW-0511">Multifunctional enzyme</keyword>
<keyword id="KW-0808">Transferase</keyword>
<reference key="1">
    <citation type="journal article" date="2008" name="Mol. Biol. Evol.">
        <title>Genome evolution of Wolbachia strain wPip from the Culex pipiens group.</title>
        <authorList>
            <person name="Klasson L."/>
            <person name="Walker T."/>
            <person name="Sebaihia M."/>
            <person name="Sanders M.J."/>
            <person name="Quail M.A."/>
            <person name="Lord A."/>
            <person name="Sanders S."/>
            <person name="Earl J."/>
            <person name="O'Neill S.L."/>
            <person name="Thomson N."/>
            <person name="Sinkins S.P."/>
            <person name="Parkhill J."/>
        </authorList>
    </citation>
    <scope>NUCLEOTIDE SEQUENCE [LARGE SCALE GENOMIC DNA]</scope>
    <source>
        <strain>wPip</strain>
    </source>
</reference>
<feature type="chain" id="PRO_1000187910" description="Beta-ketoacyl-[acyl-carrier-protein] synthase III">
    <location>
        <begin position="1"/>
        <end position="318"/>
    </location>
</feature>
<feature type="region of interest" description="ACP-binding" evidence="1">
    <location>
        <begin position="246"/>
        <end position="250"/>
    </location>
</feature>
<feature type="active site" evidence="1">
    <location>
        <position position="113"/>
    </location>
</feature>
<feature type="active site" evidence="1">
    <location>
        <position position="245"/>
    </location>
</feature>
<feature type="active site" evidence="1">
    <location>
        <position position="275"/>
    </location>
</feature>
<dbReference type="EC" id="2.3.1.180" evidence="1"/>
<dbReference type="EMBL" id="AM999887">
    <property type="protein sequence ID" value="CAQ55133.1"/>
    <property type="molecule type" value="Genomic_DNA"/>
</dbReference>
<dbReference type="RefSeq" id="WP_012481973.1">
    <property type="nucleotide sequence ID" value="NC_010981.1"/>
</dbReference>
<dbReference type="SMR" id="B3CML1"/>
<dbReference type="KEGG" id="wpi:WP1025"/>
<dbReference type="eggNOG" id="COG0332">
    <property type="taxonomic scope" value="Bacteria"/>
</dbReference>
<dbReference type="HOGENOM" id="CLU_039592_3_1_5"/>
<dbReference type="UniPathway" id="UPA00094"/>
<dbReference type="Proteomes" id="UP000008814">
    <property type="component" value="Chromosome"/>
</dbReference>
<dbReference type="GO" id="GO:0005737">
    <property type="term" value="C:cytoplasm"/>
    <property type="evidence" value="ECO:0007669"/>
    <property type="project" value="UniProtKB-SubCell"/>
</dbReference>
<dbReference type="GO" id="GO:0004315">
    <property type="term" value="F:3-oxoacyl-[acyl-carrier-protein] synthase activity"/>
    <property type="evidence" value="ECO:0007669"/>
    <property type="project" value="InterPro"/>
</dbReference>
<dbReference type="GO" id="GO:0033818">
    <property type="term" value="F:beta-ketoacyl-acyl-carrier-protein synthase III activity"/>
    <property type="evidence" value="ECO:0007669"/>
    <property type="project" value="UniProtKB-UniRule"/>
</dbReference>
<dbReference type="GO" id="GO:0006633">
    <property type="term" value="P:fatty acid biosynthetic process"/>
    <property type="evidence" value="ECO:0007669"/>
    <property type="project" value="UniProtKB-UniRule"/>
</dbReference>
<dbReference type="GO" id="GO:0044550">
    <property type="term" value="P:secondary metabolite biosynthetic process"/>
    <property type="evidence" value="ECO:0007669"/>
    <property type="project" value="TreeGrafter"/>
</dbReference>
<dbReference type="CDD" id="cd00830">
    <property type="entry name" value="KAS_III"/>
    <property type="match status" value="1"/>
</dbReference>
<dbReference type="FunFam" id="3.40.47.10:FF:000004">
    <property type="entry name" value="3-oxoacyl-[acyl-carrier-protein] synthase 3"/>
    <property type="match status" value="1"/>
</dbReference>
<dbReference type="Gene3D" id="3.40.47.10">
    <property type="match status" value="1"/>
</dbReference>
<dbReference type="HAMAP" id="MF_01815">
    <property type="entry name" value="FabH"/>
    <property type="match status" value="1"/>
</dbReference>
<dbReference type="InterPro" id="IPR013747">
    <property type="entry name" value="ACP_syn_III_C"/>
</dbReference>
<dbReference type="InterPro" id="IPR013751">
    <property type="entry name" value="ACP_syn_III_N"/>
</dbReference>
<dbReference type="InterPro" id="IPR004655">
    <property type="entry name" value="FabH"/>
</dbReference>
<dbReference type="InterPro" id="IPR016039">
    <property type="entry name" value="Thiolase-like"/>
</dbReference>
<dbReference type="NCBIfam" id="TIGR00747">
    <property type="entry name" value="fabH"/>
    <property type="match status" value="1"/>
</dbReference>
<dbReference type="NCBIfam" id="NF006829">
    <property type="entry name" value="PRK09352.1"/>
    <property type="match status" value="1"/>
</dbReference>
<dbReference type="PANTHER" id="PTHR34069">
    <property type="entry name" value="3-OXOACYL-[ACYL-CARRIER-PROTEIN] SYNTHASE 3"/>
    <property type="match status" value="1"/>
</dbReference>
<dbReference type="PANTHER" id="PTHR34069:SF2">
    <property type="entry name" value="BETA-KETOACYL-[ACYL-CARRIER-PROTEIN] SYNTHASE III"/>
    <property type="match status" value="1"/>
</dbReference>
<dbReference type="Pfam" id="PF08545">
    <property type="entry name" value="ACP_syn_III"/>
    <property type="match status" value="1"/>
</dbReference>
<dbReference type="Pfam" id="PF08541">
    <property type="entry name" value="ACP_syn_III_C"/>
    <property type="match status" value="1"/>
</dbReference>
<dbReference type="SUPFAM" id="SSF53901">
    <property type="entry name" value="Thiolase-like"/>
    <property type="match status" value="1"/>
</dbReference>
<evidence type="ECO:0000255" key="1">
    <source>
        <dbReference type="HAMAP-Rule" id="MF_01815"/>
    </source>
</evidence>
<name>FABH_WOLPP</name>
<accession>B3CML1</accession>
<sequence length="318" mass="34427">MSKSFILSTGSYLPKKILSNNEIALIVETNDEWIRQRTGIVQRHIADEGELTSDLAVNAAKNAIEKAKISIDEIGLIIVATTTPDKTLPSCATIVQSKLKCKNAFSFDVQAACSGFIYAVTVADSLIKSHNRIKYALVIGAEIMSRIVDWEDRSTCVLFGDSAGAVIIKSEMGSSGIISTNLHSDGNVDILCTNGGVSSTRDSGKILMNGREVFKHAVDKLTASVEETLKCNNLKIIDIDWLIPHQANIRIIEAVVKKLDFPIEKVINTVDKHANTSAASIPLALDYAIQESKIKSGNLVLLISIGAGLTWGSVLLRY</sequence>